<accession>C5A1E5</accession>
<protein>
    <recommendedName>
        <fullName evidence="1">Fumarate reductase subunit D</fullName>
    </recommendedName>
    <alternativeName>
        <fullName evidence="1">Fumarate reductase 13 kDa hydrophobic protein</fullName>
    </alternativeName>
    <alternativeName>
        <fullName evidence="1">Quinol-fumarate reductase subunit D</fullName>
        <shortName evidence="1">QFR subunit D</shortName>
    </alternativeName>
</protein>
<comment type="function">
    <text evidence="1">Two distinct, membrane-bound, FAD-containing enzymes are responsible for the catalysis of fumarate and succinate interconversion; fumarate reductase is used in anaerobic growth, and succinate dehydrogenase is used in aerobic growth. Anchors the catalytic components of the fumarate reductase complex to the cell inner membrane, binds quinones.</text>
</comment>
<comment type="subunit">
    <text evidence="1">Part of an enzyme complex containing four subunits: a flavoprotein (FrdA), an iron-sulfur protein (FrdB), and two hydrophobic anchor proteins (FrdC and FrdD).</text>
</comment>
<comment type="subcellular location">
    <subcellularLocation>
        <location evidence="1">Cell inner membrane</location>
        <topology evidence="1">Multi-pass membrane protein</topology>
    </subcellularLocation>
</comment>
<comment type="similarity">
    <text evidence="1">Belongs to the FrdD family.</text>
</comment>
<evidence type="ECO:0000255" key="1">
    <source>
        <dbReference type="HAMAP-Rule" id="MF_00709"/>
    </source>
</evidence>
<keyword id="KW-0997">Cell inner membrane</keyword>
<keyword id="KW-1003">Cell membrane</keyword>
<keyword id="KW-0472">Membrane</keyword>
<keyword id="KW-0812">Transmembrane</keyword>
<keyword id="KW-1133">Transmembrane helix</keyword>
<organism>
    <name type="scientific">Escherichia coli (strain K12 / MC4100 / BW2952)</name>
    <dbReference type="NCBI Taxonomy" id="595496"/>
    <lineage>
        <taxon>Bacteria</taxon>
        <taxon>Pseudomonadati</taxon>
        <taxon>Pseudomonadota</taxon>
        <taxon>Gammaproteobacteria</taxon>
        <taxon>Enterobacterales</taxon>
        <taxon>Enterobacteriaceae</taxon>
        <taxon>Escherichia</taxon>
    </lineage>
</organism>
<dbReference type="EMBL" id="CP001396">
    <property type="protein sequence ID" value="ACR63155.1"/>
    <property type="molecule type" value="Genomic_DNA"/>
</dbReference>
<dbReference type="RefSeq" id="WP_000609663.1">
    <property type="nucleotide sequence ID" value="NC_012759.1"/>
</dbReference>
<dbReference type="SMR" id="C5A1E5"/>
<dbReference type="GeneID" id="75169672"/>
<dbReference type="KEGG" id="ebw:BWG_3866"/>
<dbReference type="HOGENOM" id="CLU_168367_0_0_6"/>
<dbReference type="GO" id="GO:0045283">
    <property type="term" value="C:fumarate reductase complex"/>
    <property type="evidence" value="ECO:0007669"/>
    <property type="project" value="UniProtKB-UniRule"/>
</dbReference>
<dbReference type="GO" id="GO:0005886">
    <property type="term" value="C:plasma membrane"/>
    <property type="evidence" value="ECO:0007669"/>
    <property type="project" value="UniProtKB-SubCell"/>
</dbReference>
<dbReference type="GO" id="GO:0000104">
    <property type="term" value="F:succinate dehydrogenase activity"/>
    <property type="evidence" value="ECO:0007669"/>
    <property type="project" value="UniProtKB-UniRule"/>
</dbReference>
<dbReference type="GO" id="GO:0006106">
    <property type="term" value="P:fumarate metabolic process"/>
    <property type="evidence" value="ECO:0007669"/>
    <property type="project" value="InterPro"/>
</dbReference>
<dbReference type="CDD" id="cd00547">
    <property type="entry name" value="QFR_TypeD_subunitD"/>
    <property type="match status" value="1"/>
</dbReference>
<dbReference type="FunFam" id="1.20.1300.10:FF:000002">
    <property type="entry name" value="Fumarate reductase subunit D"/>
    <property type="match status" value="1"/>
</dbReference>
<dbReference type="Gene3D" id="1.20.1300.10">
    <property type="entry name" value="Fumarate reductase/succinate dehydrogenase, transmembrane subunit"/>
    <property type="match status" value="1"/>
</dbReference>
<dbReference type="HAMAP" id="MF_00709">
    <property type="entry name" value="Fumarate_red_D"/>
    <property type="match status" value="1"/>
</dbReference>
<dbReference type="InterPro" id="IPR003418">
    <property type="entry name" value="Fumarate_red_D"/>
</dbReference>
<dbReference type="InterPro" id="IPR034804">
    <property type="entry name" value="SQR/QFR_C/D"/>
</dbReference>
<dbReference type="NCBIfam" id="NF003977">
    <property type="entry name" value="PRK05470.1-1"/>
    <property type="match status" value="1"/>
</dbReference>
<dbReference type="Pfam" id="PF02313">
    <property type="entry name" value="Fumarate_red_D"/>
    <property type="match status" value="1"/>
</dbReference>
<dbReference type="PIRSF" id="PIRSF000179">
    <property type="entry name" value="FrdD"/>
    <property type="match status" value="1"/>
</dbReference>
<dbReference type="SUPFAM" id="SSF81343">
    <property type="entry name" value="Fumarate reductase respiratory complex transmembrane subunits"/>
    <property type="match status" value="1"/>
</dbReference>
<feature type="chain" id="PRO_1000212648" description="Fumarate reductase subunit D">
    <location>
        <begin position="1"/>
        <end position="119"/>
    </location>
</feature>
<feature type="transmembrane region" description="Helical" evidence="1">
    <location>
        <begin position="26"/>
        <end position="46"/>
    </location>
</feature>
<feature type="transmembrane region" description="Helical" evidence="1">
    <location>
        <begin position="55"/>
        <end position="75"/>
    </location>
</feature>
<feature type="transmembrane region" description="Helical" evidence="1">
    <location>
        <begin position="99"/>
        <end position="119"/>
    </location>
</feature>
<gene>
    <name evidence="1" type="primary">frdD</name>
    <name type="ordered locus">BWG_3866</name>
</gene>
<name>FRDD_ECOBW</name>
<sequence>MINPNPKRSDEPVFWGLFGAGGMWSAIIAPVMILLVGILLPLGLFPGDALSYERVLAFAQSFIGRVFLFLMIVLPLWCGLHRMHHAMHDLKIHVPAGKWVFYGLAAILTVVTLIGVVTI</sequence>
<proteinExistence type="inferred from homology"/>
<reference key="1">
    <citation type="journal article" date="2009" name="J. Bacteriol.">
        <title>Genomic sequencing reveals regulatory mutations and recombinational events in the widely used MC4100 lineage of Escherichia coli K-12.</title>
        <authorList>
            <person name="Ferenci T."/>
            <person name="Zhou Z."/>
            <person name="Betteridge T."/>
            <person name="Ren Y."/>
            <person name="Liu Y."/>
            <person name="Feng L."/>
            <person name="Reeves P.R."/>
            <person name="Wang L."/>
        </authorList>
    </citation>
    <scope>NUCLEOTIDE SEQUENCE [LARGE SCALE GENOMIC DNA]</scope>
    <source>
        <strain>K12 / MC4100 / BW2952</strain>
    </source>
</reference>